<proteinExistence type="inferred from homology"/>
<keyword id="KW-0028">Amino-acid biosynthesis</keyword>
<keyword id="KW-0963">Cytoplasm</keyword>
<keyword id="KW-0368">Histidine biosynthesis</keyword>
<keyword id="KW-0456">Lyase</keyword>
<evidence type="ECO:0000255" key="1">
    <source>
        <dbReference type="HAMAP-Rule" id="MF_00076"/>
    </source>
</evidence>
<protein>
    <recommendedName>
        <fullName evidence="1">Imidazoleglycerol-phosphate dehydratase</fullName>
        <shortName evidence="1">IGPD</shortName>
        <ecNumber evidence="1">4.2.1.19</ecNumber>
    </recommendedName>
</protein>
<sequence>MAERKASVARDTLETQIKVSIDLDGTGKARFDTGVPFLDHMMDQIARHGLIDLDIECKGDLHIDDHHTVEDIGITLGQAFAKAIGDKKGIRRYGHAYVPLDEALSRVVIDFSGRPGLQMHVPFTRASVGGFDVDLFMEFFQGFVNHAQVTLHIDNLRGHNTHHQIETVFKAFGRALRMAIELDERMAGQMPSTKGCL</sequence>
<reference key="1">
    <citation type="journal article" date="2006" name="Genome Biol.">
        <title>Genomic analysis reveals that Pseudomonas aeruginosa virulence is combinatorial.</title>
        <authorList>
            <person name="Lee D.G."/>
            <person name="Urbach J.M."/>
            <person name="Wu G."/>
            <person name="Liberati N.T."/>
            <person name="Feinbaum R.L."/>
            <person name="Miyata S."/>
            <person name="Diggins L.T."/>
            <person name="He J."/>
            <person name="Saucier M."/>
            <person name="Deziel E."/>
            <person name="Friedman L."/>
            <person name="Li L."/>
            <person name="Grills G."/>
            <person name="Montgomery K."/>
            <person name="Kucherlapati R."/>
            <person name="Rahme L.G."/>
            <person name="Ausubel F.M."/>
        </authorList>
    </citation>
    <scope>NUCLEOTIDE SEQUENCE [LARGE SCALE GENOMIC DNA]</scope>
    <source>
        <strain>UCBPP-PA14</strain>
    </source>
</reference>
<gene>
    <name evidence="1" type="primary">hisB</name>
    <name type="ordered locus">PA14_67930</name>
</gene>
<dbReference type="EC" id="4.2.1.19" evidence="1"/>
<dbReference type="EMBL" id="CP000438">
    <property type="protein sequence ID" value="ABJ14527.1"/>
    <property type="molecule type" value="Genomic_DNA"/>
</dbReference>
<dbReference type="RefSeq" id="WP_003096088.1">
    <property type="nucleotide sequence ID" value="NZ_CP034244.1"/>
</dbReference>
<dbReference type="SMR" id="Q02EM2"/>
<dbReference type="GeneID" id="77223672"/>
<dbReference type="KEGG" id="pau:PA14_67930"/>
<dbReference type="PseudoCAP" id="PA14_67930"/>
<dbReference type="HOGENOM" id="CLU_044308_3_0_6"/>
<dbReference type="BioCyc" id="PAER208963:G1G74-5727-MONOMER"/>
<dbReference type="UniPathway" id="UPA00031">
    <property type="reaction ID" value="UER00011"/>
</dbReference>
<dbReference type="Proteomes" id="UP000000653">
    <property type="component" value="Chromosome"/>
</dbReference>
<dbReference type="GO" id="GO:0005737">
    <property type="term" value="C:cytoplasm"/>
    <property type="evidence" value="ECO:0007669"/>
    <property type="project" value="UniProtKB-SubCell"/>
</dbReference>
<dbReference type="GO" id="GO:0004424">
    <property type="term" value="F:imidazoleglycerol-phosphate dehydratase activity"/>
    <property type="evidence" value="ECO:0007669"/>
    <property type="project" value="UniProtKB-UniRule"/>
</dbReference>
<dbReference type="GO" id="GO:0000105">
    <property type="term" value="P:L-histidine biosynthetic process"/>
    <property type="evidence" value="ECO:0007669"/>
    <property type="project" value="UniProtKB-UniRule"/>
</dbReference>
<dbReference type="CDD" id="cd07914">
    <property type="entry name" value="IGPD"/>
    <property type="match status" value="1"/>
</dbReference>
<dbReference type="FunFam" id="3.30.230.40:FF:000002">
    <property type="entry name" value="Imidazoleglycerol-phosphate dehydratase"/>
    <property type="match status" value="1"/>
</dbReference>
<dbReference type="FunFam" id="3.30.230.40:FF:000003">
    <property type="entry name" value="Imidazoleglycerol-phosphate dehydratase HisB"/>
    <property type="match status" value="1"/>
</dbReference>
<dbReference type="Gene3D" id="3.30.230.40">
    <property type="entry name" value="Imidazole glycerol phosphate dehydratase, domain 1"/>
    <property type="match status" value="2"/>
</dbReference>
<dbReference type="HAMAP" id="MF_00076">
    <property type="entry name" value="HisB"/>
    <property type="match status" value="1"/>
</dbReference>
<dbReference type="InterPro" id="IPR038494">
    <property type="entry name" value="IGPD_sf"/>
</dbReference>
<dbReference type="InterPro" id="IPR000807">
    <property type="entry name" value="ImidazoleglycerolP_deHydtase"/>
</dbReference>
<dbReference type="InterPro" id="IPR020565">
    <property type="entry name" value="ImidazoleglycerP_deHydtase_CS"/>
</dbReference>
<dbReference type="InterPro" id="IPR020568">
    <property type="entry name" value="Ribosomal_Su5_D2-typ_SF"/>
</dbReference>
<dbReference type="NCBIfam" id="NF002106">
    <property type="entry name" value="PRK00951.1-1"/>
    <property type="match status" value="1"/>
</dbReference>
<dbReference type="NCBIfam" id="NF002109">
    <property type="entry name" value="PRK00951.1-5"/>
    <property type="match status" value="1"/>
</dbReference>
<dbReference type="NCBIfam" id="NF002111">
    <property type="entry name" value="PRK00951.2-1"/>
    <property type="match status" value="1"/>
</dbReference>
<dbReference type="NCBIfam" id="NF002114">
    <property type="entry name" value="PRK00951.2-4"/>
    <property type="match status" value="1"/>
</dbReference>
<dbReference type="PANTHER" id="PTHR23133:SF2">
    <property type="entry name" value="IMIDAZOLEGLYCEROL-PHOSPHATE DEHYDRATASE"/>
    <property type="match status" value="1"/>
</dbReference>
<dbReference type="PANTHER" id="PTHR23133">
    <property type="entry name" value="IMIDAZOLEGLYCEROL-PHOSPHATE DEHYDRATASE HIS7"/>
    <property type="match status" value="1"/>
</dbReference>
<dbReference type="Pfam" id="PF00475">
    <property type="entry name" value="IGPD"/>
    <property type="match status" value="1"/>
</dbReference>
<dbReference type="SUPFAM" id="SSF54211">
    <property type="entry name" value="Ribosomal protein S5 domain 2-like"/>
    <property type="match status" value="2"/>
</dbReference>
<dbReference type="PROSITE" id="PS00954">
    <property type="entry name" value="IGP_DEHYDRATASE_1"/>
    <property type="match status" value="1"/>
</dbReference>
<dbReference type="PROSITE" id="PS00955">
    <property type="entry name" value="IGP_DEHYDRATASE_2"/>
    <property type="match status" value="1"/>
</dbReference>
<accession>Q02EM2</accession>
<organism>
    <name type="scientific">Pseudomonas aeruginosa (strain UCBPP-PA14)</name>
    <dbReference type="NCBI Taxonomy" id="208963"/>
    <lineage>
        <taxon>Bacteria</taxon>
        <taxon>Pseudomonadati</taxon>
        <taxon>Pseudomonadota</taxon>
        <taxon>Gammaproteobacteria</taxon>
        <taxon>Pseudomonadales</taxon>
        <taxon>Pseudomonadaceae</taxon>
        <taxon>Pseudomonas</taxon>
    </lineage>
</organism>
<comment type="catalytic activity">
    <reaction evidence="1">
        <text>D-erythro-1-(imidazol-4-yl)glycerol 3-phosphate = 3-(imidazol-4-yl)-2-oxopropyl phosphate + H2O</text>
        <dbReference type="Rhea" id="RHEA:11040"/>
        <dbReference type="ChEBI" id="CHEBI:15377"/>
        <dbReference type="ChEBI" id="CHEBI:57766"/>
        <dbReference type="ChEBI" id="CHEBI:58278"/>
        <dbReference type="EC" id="4.2.1.19"/>
    </reaction>
</comment>
<comment type="pathway">
    <text evidence="1">Amino-acid biosynthesis; L-histidine biosynthesis; L-histidine from 5-phospho-alpha-D-ribose 1-diphosphate: step 6/9.</text>
</comment>
<comment type="subcellular location">
    <subcellularLocation>
        <location evidence="1">Cytoplasm</location>
    </subcellularLocation>
</comment>
<comment type="similarity">
    <text evidence="1">Belongs to the imidazoleglycerol-phosphate dehydratase family.</text>
</comment>
<name>HIS7_PSEAB</name>
<feature type="chain" id="PRO_1000010330" description="Imidazoleglycerol-phosphate dehydratase">
    <location>
        <begin position="1"/>
        <end position="197"/>
    </location>
</feature>